<organismHost>
    <name type="scientific">Amsacta</name>
    <dbReference type="NCBI Taxonomy" id="340055"/>
</organismHost>
<keyword id="KW-0007">Acetylation</keyword>
<keyword id="KW-0903">Direct protein sequencing</keyword>
<keyword id="KW-1015">Disulfide bond</keyword>
<keyword id="KW-0426">Late protein</keyword>
<keyword id="KW-1185">Reference proteome</keyword>
<keyword id="KW-0842">Viral occlusion body</keyword>
<evidence type="ECO:0000256" key="1">
    <source>
        <dbReference type="SAM" id="MobiDB-lite"/>
    </source>
</evidence>
<evidence type="ECO:0000269" key="2">
    <source>
    </source>
</evidence>
<name>SPHR_AMEPV</name>
<dbReference type="EMBL" id="M75889">
    <property type="protein sequence ID" value="AAA42378.1"/>
    <property type="molecule type" value="Genomic_DNA"/>
</dbReference>
<dbReference type="EMBL" id="M77182">
    <property type="protein sequence ID" value="AAA42383.1"/>
    <property type="molecule type" value="Genomic_DNA"/>
</dbReference>
<dbReference type="EMBL" id="AF250284">
    <property type="protein sequence ID" value="AAG02893.1"/>
    <property type="molecule type" value="Genomic_DNA"/>
</dbReference>
<dbReference type="PIR" id="JQ1436">
    <property type="entry name" value="PYVZAM"/>
</dbReference>
<dbReference type="RefSeq" id="NP_064969.1">
    <property type="nucleotide sequence ID" value="NC_002520.1"/>
</dbReference>
<dbReference type="iPTMnet" id="P29815"/>
<dbReference type="GeneID" id="1494777"/>
<dbReference type="KEGG" id="vg:1494777"/>
<dbReference type="OrthoDB" id="336at10239"/>
<dbReference type="Proteomes" id="UP000000872">
    <property type="component" value="Genome"/>
</dbReference>
<dbReference type="GO" id="GO:0039679">
    <property type="term" value="C:viral occlusion body"/>
    <property type="evidence" value="ECO:0007669"/>
    <property type="project" value="UniProtKB-KW"/>
</dbReference>
<dbReference type="InterPro" id="IPR008843">
    <property type="entry name" value="Spheroidin"/>
</dbReference>
<dbReference type="Pfam" id="PF05541">
    <property type="entry name" value="Spheroidin"/>
    <property type="match status" value="1"/>
</dbReference>
<comment type="function">
    <text>Major component of viral occlusion bodies, the protective complexes in which the virions are embedded in the cytoplasm of their insect hosts.</text>
</comment>
<comment type="subunit">
    <text>May form disulfide-bond-linked aggregates.</text>
</comment>
<reference key="1">
    <citation type="journal article" date="1992" name="J. Gen. Virol.">
        <title>The predicted amino acid sequence of the spheroidin protein from Amsacta moorei entomopoxvirus: lack of homology between major occlusion body proteins of different poxviruses.</title>
        <authorList>
            <person name="Banville M."/>
            <person name="Dumas F."/>
            <person name="Trifiro S."/>
            <person name="Arif B."/>
            <person name="Richardson C."/>
        </authorList>
    </citation>
    <scope>NUCLEOTIDE SEQUENCE [GENOMIC DNA]</scope>
    <scope>PARTIAL PROTEIN SEQUENCE</scope>
    <scope>ACETYLATION AT SER-2</scope>
</reference>
<reference key="2">
    <citation type="journal article" date="1991" name="J. Virol.">
        <title>Identification, cloning, and sequencing of a fragment of Amsacta moorei entomopoxvirus DNA containing the spheroidin gene and three vaccinia virus-related open reading frames.</title>
        <authorList>
            <person name="Hall R.L."/>
            <person name="Moyer R.W."/>
        </authorList>
    </citation>
    <scope>NUCLEOTIDE SEQUENCE [GENOMIC DNA]</scope>
    <scope>PARTIAL PROTEIN SEQUENCE</scope>
</reference>
<reference key="3">
    <citation type="journal article" date="2000" name="Virology">
        <title>Complete genomic sequence of the Amsacta moorei entomopoxvirus: analysis and comparison with other poxviruses.</title>
        <authorList>
            <person name="Bawden A.L."/>
            <person name="Glassberg K.J."/>
            <person name="Diggans J."/>
            <person name="Shaw R."/>
            <person name="Farmerie W."/>
            <person name="Moyer R.W."/>
        </authorList>
    </citation>
    <scope>NUCLEOTIDE SEQUENCE [LARGE SCALE GENOMIC DNA]</scope>
</reference>
<protein>
    <recommendedName>
        <fullName>Spheroidin</fullName>
    </recommendedName>
</protein>
<feature type="initiator methionine" description="Removed; by host">
    <location>
        <position position="1"/>
    </location>
</feature>
<feature type="chain" id="PRO_0000099759" description="Spheroidin">
    <location>
        <begin position="2"/>
        <end position="1003"/>
    </location>
</feature>
<feature type="region of interest" description="Disordered" evidence="1">
    <location>
        <begin position="953"/>
        <end position="979"/>
    </location>
</feature>
<feature type="compositionally biased region" description="Low complexity" evidence="1">
    <location>
        <begin position="953"/>
        <end position="970"/>
    </location>
</feature>
<feature type="modified residue" description="N-acetylserine; by host" evidence="2">
    <location>
        <position position="2"/>
    </location>
</feature>
<organism>
    <name type="scientific">Amsacta moorei entomopoxvirus</name>
    <name type="common">AmEPV</name>
    <dbReference type="NCBI Taxonomy" id="28321"/>
    <lineage>
        <taxon>Viruses</taxon>
        <taxon>Varidnaviria</taxon>
        <taxon>Bamfordvirae</taxon>
        <taxon>Nucleocytoviricota</taxon>
        <taxon>Pokkesviricetes</taxon>
        <taxon>Chitovirales</taxon>
        <taxon>Poxviridae</taxon>
        <taxon>Entomopoxvirinae</taxon>
        <taxon>Betaentomopoxvirus</taxon>
    </lineage>
</organism>
<sequence>MSNVPLATKTIRKLSNRKYEIKIYLKDENTCFERVVDMVVPLYDVCNETSGVTLESCSPNIEVIELDNTHVRIKVHGDTLKEMCFELLFPCNVNEAQVWKYVSRLLLDNVSHNDVKYKLANFRLTLNGKHLKLKEIDQPLFIYFVDDLGNYGLITKENIQNNNLQVNKDASFITIFPQYAYICLGRKVYLNEKVTFDVTTDATNITLDFNKSVNIAVSFLDIYYEVNNNEQKDLLKDLLKRYGEFEVYNADTGLIYAKNLSIKNYDTVIQVERLPVNLKVRAYTKDENGRNLCLMKITSSTEVDPEYVTSNNALLGTLRVYKKFDKSHLKIVMHNRGSGNVFPLRSLYLELSNVKGYPVKASDTSRLDVGIYKLNKIYVDNDENKIILEEIEAEYRCGRQVFHERVKLNKHQCKYTPKCPFQFVVNSPDTTIHLYGISNVCLKPKVPKNLRLWGWILDCDTSRFIKHMADGSDDLDLDVRLNRNDICLKQAIKQHYTNVIILEYANTYPNCTLSLGNNRFNNVFDMNDNKTISEYTNFTKSRQDLNNMSCILGINIGNSVNISSLPGWVTPHEAKILRSGCARVREFCKSFCDLSNKRFYAMARDLVSLLFMCNYVNIEINEAVCEYPGYVILFARAIKVINDLLLINGVDNLAGYSISLPIHYGSTEKTLPNEKYGGVDKKFKYLFLKNKLKDLMRDADFVQPPLYISTYFRTLLDAPPTDNYEKYLVDSSVQSQDVLQGLLNTCNTIDTNARVASSVIGYVYEPCGTSEHKIGSEALCKMAKEASRLGNLGLVNRINESNYNKCNKYGYRGVYENNKLKTKYYREIFDCNPNNNNELISRYGYRIMDLHKIGEIFANYDESESPCERRCHYLEDRGLLYGPEYVHHRYQESCTPNTFGNNTNCVTRNGEQHVYENSCGDNATCGRRTGYGRRSRDEWNDYRKPHVYDNCADANSSSSDSCSDSSSSSESESDSDGCCDTDASLDSDIENCYQNPSKCDAGC</sequence>
<gene>
    <name type="ordered locus">AMV187</name>
    <name type="ORF">G5</name>
</gene>
<accession>P29815</accession>
<proteinExistence type="evidence at protein level"/>